<name>RL13_ECO81</name>
<protein>
    <recommendedName>
        <fullName evidence="1">Large ribosomal subunit protein uL13</fullName>
    </recommendedName>
    <alternativeName>
        <fullName evidence="2">50S ribosomal protein L13</fullName>
    </alternativeName>
</protein>
<dbReference type="EMBL" id="CU928162">
    <property type="protein sequence ID" value="CAR09884.1"/>
    <property type="molecule type" value="Genomic_DNA"/>
</dbReference>
<dbReference type="RefSeq" id="WP_000847559.1">
    <property type="nucleotide sequence ID" value="NC_011745.1"/>
</dbReference>
<dbReference type="SMR" id="B7N0L6"/>
<dbReference type="GeneID" id="89518067"/>
<dbReference type="KEGG" id="ecq:ECED1_3881"/>
<dbReference type="HOGENOM" id="CLU_082184_2_2_6"/>
<dbReference type="Proteomes" id="UP000000748">
    <property type="component" value="Chromosome"/>
</dbReference>
<dbReference type="GO" id="GO:0022625">
    <property type="term" value="C:cytosolic large ribosomal subunit"/>
    <property type="evidence" value="ECO:0007669"/>
    <property type="project" value="TreeGrafter"/>
</dbReference>
<dbReference type="GO" id="GO:0003729">
    <property type="term" value="F:mRNA binding"/>
    <property type="evidence" value="ECO:0007669"/>
    <property type="project" value="TreeGrafter"/>
</dbReference>
<dbReference type="GO" id="GO:0003735">
    <property type="term" value="F:structural constituent of ribosome"/>
    <property type="evidence" value="ECO:0007669"/>
    <property type="project" value="InterPro"/>
</dbReference>
<dbReference type="GO" id="GO:0017148">
    <property type="term" value="P:negative regulation of translation"/>
    <property type="evidence" value="ECO:0007669"/>
    <property type="project" value="TreeGrafter"/>
</dbReference>
<dbReference type="GO" id="GO:0006412">
    <property type="term" value="P:translation"/>
    <property type="evidence" value="ECO:0007669"/>
    <property type="project" value="UniProtKB-UniRule"/>
</dbReference>
<dbReference type="CDD" id="cd00392">
    <property type="entry name" value="Ribosomal_L13"/>
    <property type="match status" value="1"/>
</dbReference>
<dbReference type="FunFam" id="3.90.1180.10:FF:000001">
    <property type="entry name" value="50S ribosomal protein L13"/>
    <property type="match status" value="1"/>
</dbReference>
<dbReference type="Gene3D" id="3.90.1180.10">
    <property type="entry name" value="Ribosomal protein L13"/>
    <property type="match status" value="1"/>
</dbReference>
<dbReference type="HAMAP" id="MF_01366">
    <property type="entry name" value="Ribosomal_uL13"/>
    <property type="match status" value="1"/>
</dbReference>
<dbReference type="InterPro" id="IPR005822">
    <property type="entry name" value="Ribosomal_uL13"/>
</dbReference>
<dbReference type="InterPro" id="IPR005823">
    <property type="entry name" value="Ribosomal_uL13_bac-type"/>
</dbReference>
<dbReference type="InterPro" id="IPR023563">
    <property type="entry name" value="Ribosomal_uL13_CS"/>
</dbReference>
<dbReference type="InterPro" id="IPR036899">
    <property type="entry name" value="Ribosomal_uL13_sf"/>
</dbReference>
<dbReference type="NCBIfam" id="TIGR01066">
    <property type="entry name" value="rplM_bact"/>
    <property type="match status" value="1"/>
</dbReference>
<dbReference type="PANTHER" id="PTHR11545:SF2">
    <property type="entry name" value="LARGE RIBOSOMAL SUBUNIT PROTEIN UL13M"/>
    <property type="match status" value="1"/>
</dbReference>
<dbReference type="PANTHER" id="PTHR11545">
    <property type="entry name" value="RIBOSOMAL PROTEIN L13"/>
    <property type="match status" value="1"/>
</dbReference>
<dbReference type="Pfam" id="PF00572">
    <property type="entry name" value="Ribosomal_L13"/>
    <property type="match status" value="1"/>
</dbReference>
<dbReference type="PIRSF" id="PIRSF002181">
    <property type="entry name" value="Ribosomal_L13"/>
    <property type="match status" value="1"/>
</dbReference>
<dbReference type="SUPFAM" id="SSF52161">
    <property type="entry name" value="Ribosomal protein L13"/>
    <property type="match status" value="1"/>
</dbReference>
<dbReference type="PROSITE" id="PS00783">
    <property type="entry name" value="RIBOSOMAL_L13"/>
    <property type="match status" value="1"/>
</dbReference>
<organism>
    <name type="scientific">Escherichia coli O81 (strain ED1a)</name>
    <dbReference type="NCBI Taxonomy" id="585397"/>
    <lineage>
        <taxon>Bacteria</taxon>
        <taxon>Pseudomonadati</taxon>
        <taxon>Pseudomonadota</taxon>
        <taxon>Gammaproteobacteria</taxon>
        <taxon>Enterobacterales</taxon>
        <taxon>Enterobacteriaceae</taxon>
        <taxon>Escherichia</taxon>
    </lineage>
</organism>
<comment type="function">
    <text evidence="1">This protein is one of the early assembly proteins of the 50S ribosomal subunit, although it is not seen to bind rRNA by itself. It is important during the early stages of 50S assembly.</text>
</comment>
<comment type="subunit">
    <text evidence="1">Part of the 50S ribosomal subunit.</text>
</comment>
<comment type="similarity">
    <text evidence="1">Belongs to the universal ribosomal protein uL13 family.</text>
</comment>
<accession>B7N0L6</accession>
<proteinExistence type="inferred from homology"/>
<keyword id="KW-0687">Ribonucleoprotein</keyword>
<keyword id="KW-0689">Ribosomal protein</keyword>
<sequence>MKTFTAKPETVKRDWYVVDATGKTLGRLATELARRLRGKHKAEYTPHVDTGDYIIVLNADKVAVTGNKRTDKVYYHHTGHIGGIKQATFEEMIARRPERVIEIAVKGMLPKGPLGRAMFRKLKVYAGNEHNHAAQQPQVLDI</sequence>
<reference key="1">
    <citation type="journal article" date="2009" name="PLoS Genet.">
        <title>Organised genome dynamics in the Escherichia coli species results in highly diverse adaptive paths.</title>
        <authorList>
            <person name="Touchon M."/>
            <person name="Hoede C."/>
            <person name="Tenaillon O."/>
            <person name="Barbe V."/>
            <person name="Baeriswyl S."/>
            <person name="Bidet P."/>
            <person name="Bingen E."/>
            <person name="Bonacorsi S."/>
            <person name="Bouchier C."/>
            <person name="Bouvet O."/>
            <person name="Calteau A."/>
            <person name="Chiapello H."/>
            <person name="Clermont O."/>
            <person name="Cruveiller S."/>
            <person name="Danchin A."/>
            <person name="Diard M."/>
            <person name="Dossat C."/>
            <person name="Karoui M.E."/>
            <person name="Frapy E."/>
            <person name="Garry L."/>
            <person name="Ghigo J.M."/>
            <person name="Gilles A.M."/>
            <person name="Johnson J."/>
            <person name="Le Bouguenec C."/>
            <person name="Lescat M."/>
            <person name="Mangenot S."/>
            <person name="Martinez-Jehanne V."/>
            <person name="Matic I."/>
            <person name="Nassif X."/>
            <person name="Oztas S."/>
            <person name="Petit M.A."/>
            <person name="Pichon C."/>
            <person name="Rouy Z."/>
            <person name="Ruf C.S."/>
            <person name="Schneider D."/>
            <person name="Tourret J."/>
            <person name="Vacherie B."/>
            <person name="Vallenet D."/>
            <person name="Medigue C."/>
            <person name="Rocha E.P.C."/>
            <person name="Denamur E."/>
        </authorList>
    </citation>
    <scope>NUCLEOTIDE SEQUENCE [LARGE SCALE GENOMIC DNA]</scope>
    <source>
        <strain>ED1a</strain>
    </source>
</reference>
<gene>
    <name evidence="1" type="primary">rplM</name>
    <name type="ordered locus">ECED1_3881</name>
</gene>
<evidence type="ECO:0000255" key="1">
    <source>
        <dbReference type="HAMAP-Rule" id="MF_01366"/>
    </source>
</evidence>
<evidence type="ECO:0000305" key="2"/>
<feature type="chain" id="PRO_1000166869" description="Large ribosomal subunit protein uL13">
    <location>
        <begin position="1"/>
        <end position="142"/>
    </location>
</feature>